<feature type="chain" id="PRO_1000122460" description="Glutamyl-tRNA(Gln) amidotransferase subunit A">
    <location>
        <begin position="1"/>
        <end position="493"/>
    </location>
</feature>
<feature type="active site" description="Charge relay system" evidence="1">
    <location>
        <position position="79"/>
    </location>
</feature>
<feature type="active site" description="Charge relay system" evidence="1">
    <location>
        <position position="159"/>
    </location>
</feature>
<feature type="active site" description="Acyl-ester intermediate" evidence="1">
    <location>
        <position position="183"/>
    </location>
</feature>
<proteinExistence type="inferred from homology"/>
<keyword id="KW-0067">ATP-binding</keyword>
<keyword id="KW-0436">Ligase</keyword>
<keyword id="KW-0547">Nucleotide-binding</keyword>
<keyword id="KW-0648">Protein biosynthesis</keyword>
<keyword id="KW-1185">Reference proteome</keyword>
<gene>
    <name evidence="1" type="primary">gatA</name>
    <name type="ordered locus">Avi_1773</name>
</gene>
<protein>
    <recommendedName>
        <fullName evidence="1">Glutamyl-tRNA(Gln) amidotransferase subunit A</fullName>
        <shortName evidence="1">Glu-ADT subunit A</shortName>
        <ecNumber evidence="1">6.3.5.7</ecNumber>
    </recommendedName>
</protein>
<dbReference type="EC" id="6.3.5.7" evidence="1"/>
<dbReference type="EMBL" id="CP000633">
    <property type="protein sequence ID" value="ACM36271.1"/>
    <property type="molecule type" value="Genomic_DNA"/>
</dbReference>
<dbReference type="RefSeq" id="WP_015915694.1">
    <property type="nucleotide sequence ID" value="NC_011989.1"/>
</dbReference>
<dbReference type="SMR" id="B9JVJ1"/>
<dbReference type="STRING" id="311402.Avi_1773"/>
<dbReference type="KEGG" id="avi:Avi_1773"/>
<dbReference type="eggNOG" id="COG0154">
    <property type="taxonomic scope" value="Bacteria"/>
</dbReference>
<dbReference type="HOGENOM" id="CLU_009600_0_3_5"/>
<dbReference type="Proteomes" id="UP000001596">
    <property type="component" value="Chromosome 1"/>
</dbReference>
<dbReference type="GO" id="GO:0030956">
    <property type="term" value="C:glutamyl-tRNA(Gln) amidotransferase complex"/>
    <property type="evidence" value="ECO:0007669"/>
    <property type="project" value="InterPro"/>
</dbReference>
<dbReference type="GO" id="GO:0005524">
    <property type="term" value="F:ATP binding"/>
    <property type="evidence" value="ECO:0007669"/>
    <property type="project" value="UniProtKB-KW"/>
</dbReference>
<dbReference type="GO" id="GO:0050567">
    <property type="term" value="F:glutaminyl-tRNA synthase (glutamine-hydrolyzing) activity"/>
    <property type="evidence" value="ECO:0007669"/>
    <property type="project" value="UniProtKB-UniRule"/>
</dbReference>
<dbReference type="GO" id="GO:0006412">
    <property type="term" value="P:translation"/>
    <property type="evidence" value="ECO:0007669"/>
    <property type="project" value="UniProtKB-UniRule"/>
</dbReference>
<dbReference type="Gene3D" id="3.90.1300.10">
    <property type="entry name" value="Amidase signature (AS) domain"/>
    <property type="match status" value="1"/>
</dbReference>
<dbReference type="HAMAP" id="MF_00120">
    <property type="entry name" value="GatA"/>
    <property type="match status" value="1"/>
</dbReference>
<dbReference type="InterPro" id="IPR000120">
    <property type="entry name" value="Amidase"/>
</dbReference>
<dbReference type="InterPro" id="IPR020556">
    <property type="entry name" value="Amidase_CS"/>
</dbReference>
<dbReference type="InterPro" id="IPR023631">
    <property type="entry name" value="Amidase_dom"/>
</dbReference>
<dbReference type="InterPro" id="IPR036928">
    <property type="entry name" value="AS_sf"/>
</dbReference>
<dbReference type="InterPro" id="IPR004412">
    <property type="entry name" value="GatA"/>
</dbReference>
<dbReference type="NCBIfam" id="TIGR00132">
    <property type="entry name" value="gatA"/>
    <property type="match status" value="1"/>
</dbReference>
<dbReference type="PANTHER" id="PTHR11895:SF151">
    <property type="entry name" value="GLUTAMYL-TRNA(GLN) AMIDOTRANSFERASE SUBUNIT A"/>
    <property type="match status" value="1"/>
</dbReference>
<dbReference type="PANTHER" id="PTHR11895">
    <property type="entry name" value="TRANSAMIDASE"/>
    <property type="match status" value="1"/>
</dbReference>
<dbReference type="Pfam" id="PF01425">
    <property type="entry name" value="Amidase"/>
    <property type="match status" value="1"/>
</dbReference>
<dbReference type="SUPFAM" id="SSF75304">
    <property type="entry name" value="Amidase signature (AS) enzymes"/>
    <property type="match status" value="1"/>
</dbReference>
<dbReference type="PROSITE" id="PS00571">
    <property type="entry name" value="AMIDASES"/>
    <property type="match status" value="1"/>
</dbReference>
<name>GATA_ALLAM</name>
<sequence>MSELTSLTIAEAREKLVSKDITAVELTDAYLGAIEAANGAINAYVTVTPEIARDMAKASDARLATGKAGALEGIPLGVKDLFATRDVHTQACSNILDGFKPKYESTVTQNLWNEGAVMLGKLNMDEFAMGSSNENSFYGPVVNPWRATGSEEKLVPGGSSGGSAAAVAARLCAGATASDTGGSIRQPAAFTGTVGIKPTYGRCSRWGIVAYASSLDQAGPIARDVRDAAILLKSMASIDEKDTTSVDLLAPNYEAAIGQSVKGMKIGIPREYRVDGMPEEIEALWQKGMAWLKEAGAEIVDISLPHTKYALPAYYIVASAEASSNLARYDGVRYGLRVDGKDIADMYEKSRAAGFGKEVQRRILMGTYVLSAGYYDAYYLRAQKVRTLIKRDFEQVFAAGVDAILTPITPSSAFAIGDKDLAADPVKMYLNDIFSVTLNMAGLPGLSVPAGLDAKGLPLGLQLIGKPFEEETLFKTAHVIEQAAGKFTPAQWW</sequence>
<reference key="1">
    <citation type="journal article" date="2009" name="J. Bacteriol.">
        <title>Genome sequences of three Agrobacterium biovars help elucidate the evolution of multichromosome genomes in bacteria.</title>
        <authorList>
            <person name="Slater S.C."/>
            <person name="Goldman B.S."/>
            <person name="Goodner B."/>
            <person name="Setubal J.C."/>
            <person name="Farrand S.K."/>
            <person name="Nester E.W."/>
            <person name="Burr T.J."/>
            <person name="Banta L."/>
            <person name="Dickerman A.W."/>
            <person name="Paulsen I."/>
            <person name="Otten L."/>
            <person name="Suen G."/>
            <person name="Welch R."/>
            <person name="Almeida N.F."/>
            <person name="Arnold F."/>
            <person name="Burton O.T."/>
            <person name="Du Z."/>
            <person name="Ewing A."/>
            <person name="Godsy E."/>
            <person name="Heisel S."/>
            <person name="Houmiel K.L."/>
            <person name="Jhaveri J."/>
            <person name="Lu J."/>
            <person name="Miller N.M."/>
            <person name="Norton S."/>
            <person name="Chen Q."/>
            <person name="Phoolcharoen W."/>
            <person name="Ohlin V."/>
            <person name="Ondrusek D."/>
            <person name="Pride N."/>
            <person name="Stricklin S.L."/>
            <person name="Sun J."/>
            <person name="Wheeler C."/>
            <person name="Wilson L."/>
            <person name="Zhu H."/>
            <person name="Wood D.W."/>
        </authorList>
    </citation>
    <scope>NUCLEOTIDE SEQUENCE [LARGE SCALE GENOMIC DNA]</scope>
    <source>
        <strain>ATCC BAA-846 / DSM 112012 / S4</strain>
    </source>
</reference>
<organism>
    <name type="scientific">Allorhizobium ampelinum (strain ATCC BAA-846 / DSM 112012 / S4)</name>
    <name type="common">Agrobacterium vitis (strain S4)</name>
    <dbReference type="NCBI Taxonomy" id="311402"/>
    <lineage>
        <taxon>Bacteria</taxon>
        <taxon>Pseudomonadati</taxon>
        <taxon>Pseudomonadota</taxon>
        <taxon>Alphaproteobacteria</taxon>
        <taxon>Hyphomicrobiales</taxon>
        <taxon>Rhizobiaceae</taxon>
        <taxon>Rhizobium/Agrobacterium group</taxon>
        <taxon>Allorhizobium</taxon>
        <taxon>Allorhizobium ampelinum</taxon>
    </lineage>
</organism>
<evidence type="ECO:0000255" key="1">
    <source>
        <dbReference type="HAMAP-Rule" id="MF_00120"/>
    </source>
</evidence>
<accession>B9JVJ1</accession>
<comment type="function">
    <text evidence="1">Allows the formation of correctly charged Gln-tRNA(Gln) through the transamidation of misacylated Glu-tRNA(Gln) in organisms which lack glutaminyl-tRNA synthetase. The reaction takes place in the presence of glutamine and ATP through an activated gamma-phospho-Glu-tRNA(Gln).</text>
</comment>
<comment type="catalytic activity">
    <reaction evidence="1">
        <text>L-glutamyl-tRNA(Gln) + L-glutamine + ATP + H2O = L-glutaminyl-tRNA(Gln) + L-glutamate + ADP + phosphate + H(+)</text>
        <dbReference type="Rhea" id="RHEA:17521"/>
        <dbReference type="Rhea" id="RHEA-COMP:9681"/>
        <dbReference type="Rhea" id="RHEA-COMP:9684"/>
        <dbReference type="ChEBI" id="CHEBI:15377"/>
        <dbReference type="ChEBI" id="CHEBI:15378"/>
        <dbReference type="ChEBI" id="CHEBI:29985"/>
        <dbReference type="ChEBI" id="CHEBI:30616"/>
        <dbReference type="ChEBI" id="CHEBI:43474"/>
        <dbReference type="ChEBI" id="CHEBI:58359"/>
        <dbReference type="ChEBI" id="CHEBI:78520"/>
        <dbReference type="ChEBI" id="CHEBI:78521"/>
        <dbReference type="ChEBI" id="CHEBI:456216"/>
        <dbReference type="EC" id="6.3.5.7"/>
    </reaction>
</comment>
<comment type="subunit">
    <text evidence="1">Heterotrimer of A, B and C subunits.</text>
</comment>
<comment type="similarity">
    <text evidence="1">Belongs to the amidase family. GatA subfamily.</text>
</comment>